<proteinExistence type="evidence at protein level"/>
<feature type="chain" id="PRO_0000233958" description="Pyruvate/ketoisovalerate oxidoreductases common subunit gamma">
    <location>
        <begin position="1"/>
        <end position="185"/>
    </location>
</feature>
<name>PORC_THELN</name>
<keyword id="KW-0903">Direct protein sequencing</keyword>
<keyword id="KW-0560">Oxidoreductase</keyword>
<accession>P84820</accession>
<accession>H3ZL65</accession>
<accession>Q9UWG1</accession>
<evidence type="ECO:0000250" key="1">
    <source>
        <dbReference type="UniProtKB" id="Q51799"/>
    </source>
</evidence>
<evidence type="ECO:0000305" key="2"/>
<organism>
    <name type="scientific">Thermococcus litoralis (strain ATCC 51850 / DSM 5473 / JCM 8560 / NS-C)</name>
    <dbReference type="NCBI Taxonomy" id="523849"/>
    <lineage>
        <taxon>Archaea</taxon>
        <taxon>Methanobacteriati</taxon>
        <taxon>Methanobacteriota</taxon>
        <taxon>Thermococci</taxon>
        <taxon>Thermococcales</taxon>
        <taxon>Thermococcaceae</taxon>
        <taxon>Thermococcus</taxon>
    </lineage>
</organism>
<comment type="catalytic activity">
    <reaction>
        <text>2 oxidized [2Fe-2S]-[ferredoxin] + pyruvate + CoA = 2 reduced [2Fe-2S]-[ferredoxin] + acetyl-CoA + CO2 + H(+)</text>
        <dbReference type="Rhea" id="RHEA:12765"/>
        <dbReference type="Rhea" id="RHEA-COMP:10000"/>
        <dbReference type="Rhea" id="RHEA-COMP:10001"/>
        <dbReference type="ChEBI" id="CHEBI:15361"/>
        <dbReference type="ChEBI" id="CHEBI:15378"/>
        <dbReference type="ChEBI" id="CHEBI:16526"/>
        <dbReference type="ChEBI" id="CHEBI:33737"/>
        <dbReference type="ChEBI" id="CHEBI:33738"/>
        <dbReference type="ChEBI" id="CHEBI:57287"/>
        <dbReference type="ChEBI" id="CHEBI:57288"/>
        <dbReference type="EC" id="1.2.7.1"/>
    </reaction>
</comment>
<comment type="catalytic activity">
    <reaction>
        <text>3-methyl-2-oxobutanoate + 2 oxidized [2Fe-2S]-[ferredoxin] + CoA = 2-methylpropanoyl-CoA + 2 reduced [2Fe-2S]-[ferredoxin] + CO2 + H(+)</text>
        <dbReference type="Rhea" id="RHEA:11712"/>
        <dbReference type="Rhea" id="RHEA-COMP:10000"/>
        <dbReference type="Rhea" id="RHEA-COMP:10001"/>
        <dbReference type="ChEBI" id="CHEBI:11851"/>
        <dbReference type="ChEBI" id="CHEBI:15378"/>
        <dbReference type="ChEBI" id="CHEBI:16526"/>
        <dbReference type="ChEBI" id="CHEBI:33737"/>
        <dbReference type="ChEBI" id="CHEBI:33738"/>
        <dbReference type="ChEBI" id="CHEBI:57287"/>
        <dbReference type="ChEBI" id="CHEBI:57338"/>
        <dbReference type="EC" id="1.2.7.7"/>
    </reaction>
</comment>
<comment type="subunit">
    <text evidence="1">Heterotetramer of one alpha, one beta, one delta and one gamma chain.</text>
</comment>
<reference key="1">
    <citation type="journal article" date="2012" name="J. Bacteriol.">
        <title>Genome sequence of the model hyperthermophilic archaeon Thermococcus litoralis NS-C.</title>
        <authorList>
            <person name="Gardner A.F."/>
            <person name="Kumar S."/>
            <person name="Perler F.B."/>
        </authorList>
    </citation>
    <scope>NUCLEOTIDE SEQUENCE [LARGE SCALE GENOMIC DNA]</scope>
    <source>
        <strain>ATCC 51850 / DSM 5473 / JCM 8560 / NS-C</strain>
    </source>
</reference>
<reference evidence="2" key="2">
    <citation type="journal article" date="1996" name="J. Bacteriol.">
        <title>Characterization of 2-ketoisovalerate ferredoxin oxidoreductase, a new and reversible coenzyme A-dependent enzyme involved in peptide fermentation by hyperthermophilic archaea.</title>
        <authorList>
            <person name="Heider J."/>
            <person name="Mai X."/>
            <person name="Adams M.W.W."/>
        </authorList>
    </citation>
    <scope>PROTEIN SEQUENCE OF 1-15</scope>
    <source>
        <strain>ATCC 51850 / DSM 5473 / JCM 8560 / NS-C</strain>
    </source>
</reference>
<sequence>MIEIRFHGRGGQGAVTAANILAEAAFLEGKYVQAFPFFGVERRGAPVTAFTRIDDKPIRIKTQIYEPDVVVVLDPSLLDTVDVTAGLKEGGMVIVNTEKTKEEVLEKLKKKPAKLALVDATTIALEILGLPITNTSILGAVAKATGIVKIESVEEAIKDTFSGELGKKNAKAAREAFEKTVVYEL</sequence>
<dbReference type="EC" id="1.2.7.1"/>
<dbReference type="EC" id="1.2.7.7"/>
<dbReference type="EMBL" id="CP006670">
    <property type="protein sequence ID" value="EHR79315.1"/>
    <property type="molecule type" value="Genomic_DNA"/>
</dbReference>
<dbReference type="RefSeq" id="WP_004067087.1">
    <property type="nucleotide sequence ID" value="NC_022084.1"/>
</dbReference>
<dbReference type="SMR" id="P84820"/>
<dbReference type="STRING" id="523849.OCC_07501"/>
<dbReference type="PaxDb" id="523849-OCC_07501"/>
<dbReference type="GeneID" id="16550288"/>
<dbReference type="KEGG" id="tlt:OCC_07501"/>
<dbReference type="HOGENOM" id="CLU_087284_2_0_2"/>
<dbReference type="OrthoDB" id="372091at2157"/>
<dbReference type="BioCyc" id="MetaCyc:MONOMER-17655"/>
<dbReference type="Proteomes" id="UP000015502">
    <property type="component" value="Chromosome"/>
</dbReference>
<dbReference type="GO" id="GO:0043807">
    <property type="term" value="F:3-methyl-2-oxobutanoate dehydrogenase (ferredoxin) activity"/>
    <property type="evidence" value="ECO:0007669"/>
    <property type="project" value="UniProtKB-EC"/>
</dbReference>
<dbReference type="GO" id="GO:0019164">
    <property type="term" value="F:pyruvate synthase activity"/>
    <property type="evidence" value="ECO:0007669"/>
    <property type="project" value="UniProtKB-EC"/>
</dbReference>
<dbReference type="Gene3D" id="3.40.920.10">
    <property type="entry name" value="Pyruvate-ferredoxin oxidoreductase, PFOR, domain III"/>
    <property type="match status" value="1"/>
</dbReference>
<dbReference type="InterPro" id="IPR051626">
    <property type="entry name" value="Oxidoreductase_gamma_subunit"/>
</dbReference>
<dbReference type="InterPro" id="IPR011894">
    <property type="entry name" value="PorC_KorC"/>
</dbReference>
<dbReference type="InterPro" id="IPR019752">
    <property type="entry name" value="Pyrv/ketoisovalerate_OxRed_cat"/>
</dbReference>
<dbReference type="InterPro" id="IPR002869">
    <property type="entry name" value="Pyrv_flavodox_OxRed_cen"/>
</dbReference>
<dbReference type="NCBIfam" id="TIGR02175">
    <property type="entry name" value="PorC_KorC"/>
    <property type="match status" value="1"/>
</dbReference>
<dbReference type="NCBIfam" id="NF006321">
    <property type="entry name" value="PRK08534.1"/>
    <property type="match status" value="1"/>
</dbReference>
<dbReference type="NCBIfam" id="NF010632">
    <property type="entry name" value="PRK14029.1"/>
    <property type="match status" value="1"/>
</dbReference>
<dbReference type="PANTHER" id="PTHR43366">
    <property type="entry name" value="PYRUVATE SYNTHASE SUBUNIT PORC"/>
    <property type="match status" value="1"/>
</dbReference>
<dbReference type="PANTHER" id="PTHR43366:SF1">
    <property type="entry name" value="PYRUVATE SYNTHASE SUBUNIT PORC"/>
    <property type="match status" value="1"/>
</dbReference>
<dbReference type="Pfam" id="PF01558">
    <property type="entry name" value="POR"/>
    <property type="match status" value="1"/>
</dbReference>
<dbReference type="SUPFAM" id="SSF53323">
    <property type="entry name" value="Pyruvate-ferredoxin oxidoreductase, PFOR, domain III"/>
    <property type="match status" value="1"/>
</dbReference>
<protein>
    <recommendedName>
        <fullName>Pyruvate/ketoisovalerate oxidoreductases common subunit gamma</fullName>
    </recommendedName>
    <domain>
        <recommendedName>
            <fullName>Pyruvate synthase subunit PorC</fullName>
            <ecNumber>1.2.7.1</ecNumber>
        </recommendedName>
        <alternativeName>
            <fullName>Pyruvate oxidoreductase gamma chain</fullName>
            <shortName>POR</shortName>
        </alternativeName>
        <alternativeName>
            <fullName>Pyruvic-ferredoxin oxidoreductase subunit gamma</fullName>
        </alternativeName>
    </domain>
    <domain>
        <recommendedName>
            <fullName>Ketoisovalerate oxidoreductase subunit VorC</fullName>
            <shortName>VOR</shortName>
            <ecNumber>1.2.7.7</ecNumber>
        </recommendedName>
        <alternativeName>
            <fullName>2-oxoisovalerate ferredoxin reductase subunit gamma</fullName>
        </alternativeName>
        <alternativeName>
            <fullName>2-oxoisovalerate oxidoreductase gamma chain</fullName>
        </alternativeName>
    </domain>
</protein>
<gene>
    <name type="primary">porG</name>
    <name type="ORF">OCC_07501</name>
</gene>